<organism>
    <name type="scientific">Phocaeicola vulgatus (strain ATCC 8482 / DSM 1447 / JCM 5826 / CCUG 4940 / NBRC 14291 / NCTC 11154)</name>
    <name type="common">Bacteroides vulgatus</name>
    <dbReference type="NCBI Taxonomy" id="435590"/>
    <lineage>
        <taxon>Bacteria</taxon>
        <taxon>Pseudomonadati</taxon>
        <taxon>Bacteroidota</taxon>
        <taxon>Bacteroidia</taxon>
        <taxon>Bacteroidales</taxon>
        <taxon>Bacteroidaceae</taxon>
        <taxon>Phocaeicola</taxon>
    </lineage>
</organism>
<sequence>MNQQYPSMLLEKAVGEFAKLPGVGRKTAMRLVLHLLRQDTAVVEAFGNAMITLKHEVKYCKVCHNISDTETCRICSNPARDASTICVVESIRDVMAVEATQQYRGLYHVLGGVISPMDGIGPSDLQIESLVERVKGGEVKEVILALSSTMEGDTTNFYISRKLDGMDVKLSVIARGISIGDELEYTDEVTLGRSIINRTLFTGTA</sequence>
<name>RECR_PHOV8</name>
<keyword id="KW-0227">DNA damage</keyword>
<keyword id="KW-0233">DNA recombination</keyword>
<keyword id="KW-0234">DNA repair</keyword>
<keyword id="KW-0479">Metal-binding</keyword>
<keyword id="KW-0862">Zinc</keyword>
<keyword id="KW-0863">Zinc-finger</keyword>
<dbReference type="EMBL" id="CP000139">
    <property type="protein sequence ID" value="ABR40610.1"/>
    <property type="molecule type" value="Genomic_DNA"/>
</dbReference>
<dbReference type="RefSeq" id="WP_005846775.1">
    <property type="nucleotide sequence ID" value="NZ_JANSWM010000059.1"/>
</dbReference>
<dbReference type="SMR" id="A6L4J6"/>
<dbReference type="STRING" id="435590.BVU_2971"/>
<dbReference type="PaxDb" id="435590-BVU_2971"/>
<dbReference type="GeneID" id="93446849"/>
<dbReference type="KEGG" id="bvu:BVU_2971"/>
<dbReference type="eggNOG" id="COG0353">
    <property type="taxonomic scope" value="Bacteria"/>
</dbReference>
<dbReference type="HOGENOM" id="CLU_060739_1_1_10"/>
<dbReference type="BioCyc" id="BVUL435590:G1G59-3093-MONOMER"/>
<dbReference type="Proteomes" id="UP000002861">
    <property type="component" value="Chromosome"/>
</dbReference>
<dbReference type="GO" id="GO:0003677">
    <property type="term" value="F:DNA binding"/>
    <property type="evidence" value="ECO:0007669"/>
    <property type="project" value="UniProtKB-UniRule"/>
</dbReference>
<dbReference type="GO" id="GO:0008270">
    <property type="term" value="F:zinc ion binding"/>
    <property type="evidence" value="ECO:0007669"/>
    <property type="project" value="UniProtKB-KW"/>
</dbReference>
<dbReference type="GO" id="GO:0006310">
    <property type="term" value="P:DNA recombination"/>
    <property type="evidence" value="ECO:0007669"/>
    <property type="project" value="UniProtKB-UniRule"/>
</dbReference>
<dbReference type="GO" id="GO:0006281">
    <property type="term" value="P:DNA repair"/>
    <property type="evidence" value="ECO:0007669"/>
    <property type="project" value="UniProtKB-UniRule"/>
</dbReference>
<dbReference type="CDD" id="cd01025">
    <property type="entry name" value="TOPRIM_recR"/>
    <property type="match status" value="1"/>
</dbReference>
<dbReference type="Gene3D" id="3.30.60.80">
    <property type="match status" value="1"/>
</dbReference>
<dbReference type="Gene3D" id="3.40.1360.10">
    <property type="match status" value="1"/>
</dbReference>
<dbReference type="Gene3D" id="6.10.250.240">
    <property type="match status" value="1"/>
</dbReference>
<dbReference type="Gene3D" id="1.10.8.420">
    <property type="entry name" value="RecR Domain 1"/>
    <property type="match status" value="1"/>
</dbReference>
<dbReference type="HAMAP" id="MF_00017">
    <property type="entry name" value="RecR"/>
    <property type="match status" value="1"/>
</dbReference>
<dbReference type="InterPro" id="IPR000093">
    <property type="entry name" value="DNA_Rcmb_RecR"/>
</dbReference>
<dbReference type="InterPro" id="IPR023627">
    <property type="entry name" value="Rcmb_RecR"/>
</dbReference>
<dbReference type="InterPro" id="IPR015967">
    <property type="entry name" value="Rcmb_RecR_Znf"/>
</dbReference>
<dbReference type="InterPro" id="IPR006171">
    <property type="entry name" value="TOPRIM_dom"/>
</dbReference>
<dbReference type="InterPro" id="IPR034137">
    <property type="entry name" value="TOPRIM_RecR"/>
</dbReference>
<dbReference type="NCBIfam" id="TIGR00615">
    <property type="entry name" value="recR"/>
    <property type="match status" value="1"/>
</dbReference>
<dbReference type="PANTHER" id="PTHR30446">
    <property type="entry name" value="RECOMBINATION PROTEIN RECR"/>
    <property type="match status" value="1"/>
</dbReference>
<dbReference type="PANTHER" id="PTHR30446:SF0">
    <property type="entry name" value="RECOMBINATION PROTEIN RECR"/>
    <property type="match status" value="1"/>
</dbReference>
<dbReference type="Pfam" id="PF21175">
    <property type="entry name" value="RecR_C"/>
    <property type="match status" value="1"/>
</dbReference>
<dbReference type="Pfam" id="PF21176">
    <property type="entry name" value="RecR_HhH"/>
    <property type="match status" value="1"/>
</dbReference>
<dbReference type="Pfam" id="PF02132">
    <property type="entry name" value="RecR_ZnF"/>
    <property type="match status" value="1"/>
</dbReference>
<dbReference type="Pfam" id="PF13662">
    <property type="entry name" value="Toprim_4"/>
    <property type="match status" value="1"/>
</dbReference>
<dbReference type="SMART" id="SM00493">
    <property type="entry name" value="TOPRIM"/>
    <property type="match status" value="1"/>
</dbReference>
<dbReference type="SUPFAM" id="SSF111304">
    <property type="entry name" value="Recombination protein RecR"/>
    <property type="match status" value="1"/>
</dbReference>
<dbReference type="PROSITE" id="PS01300">
    <property type="entry name" value="RECR"/>
    <property type="match status" value="1"/>
</dbReference>
<dbReference type="PROSITE" id="PS50880">
    <property type="entry name" value="TOPRIM"/>
    <property type="match status" value="1"/>
</dbReference>
<feature type="chain" id="PRO_1000001510" description="Recombination protein RecR">
    <location>
        <begin position="1"/>
        <end position="205"/>
    </location>
</feature>
<feature type="domain" description="Toprim" evidence="1">
    <location>
        <begin position="83"/>
        <end position="178"/>
    </location>
</feature>
<feature type="zinc finger region" description="C4-type" evidence="1">
    <location>
        <begin position="60"/>
        <end position="75"/>
    </location>
</feature>
<comment type="function">
    <text evidence="1">May play a role in DNA repair. It seems to be involved in an RecBC-independent recombinational process of DNA repair. It may act with RecF and RecO.</text>
</comment>
<comment type="similarity">
    <text evidence="1">Belongs to the RecR family.</text>
</comment>
<proteinExistence type="inferred from homology"/>
<protein>
    <recommendedName>
        <fullName evidence="1">Recombination protein RecR</fullName>
    </recommendedName>
</protein>
<accession>A6L4J6</accession>
<evidence type="ECO:0000255" key="1">
    <source>
        <dbReference type="HAMAP-Rule" id="MF_00017"/>
    </source>
</evidence>
<reference key="1">
    <citation type="journal article" date="2007" name="PLoS Biol.">
        <title>Evolution of symbiotic bacteria in the distal human intestine.</title>
        <authorList>
            <person name="Xu J."/>
            <person name="Mahowald M.A."/>
            <person name="Ley R.E."/>
            <person name="Lozupone C.A."/>
            <person name="Hamady M."/>
            <person name="Martens E.C."/>
            <person name="Henrissat B."/>
            <person name="Coutinho P.M."/>
            <person name="Minx P."/>
            <person name="Latreille P."/>
            <person name="Cordum H."/>
            <person name="Van Brunt A."/>
            <person name="Kim K."/>
            <person name="Fulton R.S."/>
            <person name="Fulton L.A."/>
            <person name="Clifton S.W."/>
            <person name="Wilson R.K."/>
            <person name="Knight R.D."/>
            <person name="Gordon J.I."/>
        </authorList>
    </citation>
    <scope>NUCLEOTIDE SEQUENCE [LARGE SCALE GENOMIC DNA]</scope>
    <source>
        <strain>ATCC 8482 / DSM 1447 / JCM 5826 / CCUG 4940 / NBRC 14291 / NCTC 11154</strain>
    </source>
</reference>
<gene>
    <name evidence="1" type="primary">recR</name>
    <name type="ordered locus">BVU_2971</name>
</gene>